<evidence type="ECO:0000255" key="1">
    <source>
        <dbReference type="PROSITE-ProRule" id="PRU01047"/>
    </source>
</evidence>
<evidence type="ECO:0000256" key="2">
    <source>
        <dbReference type="SAM" id="MobiDB-lite"/>
    </source>
</evidence>
<evidence type="ECO:0000269" key="3">
    <source>
    </source>
</evidence>
<evidence type="ECO:0000269" key="4">
    <source>
    </source>
</evidence>
<evidence type="ECO:0000269" key="5">
    <source>
    </source>
</evidence>
<evidence type="ECO:0000269" key="6">
    <source>
    </source>
</evidence>
<evidence type="ECO:0000269" key="7">
    <source>
    </source>
</evidence>
<evidence type="ECO:0000269" key="8">
    <source>
    </source>
</evidence>
<evidence type="ECO:0000269" key="9">
    <source ref="8"/>
</evidence>
<evidence type="ECO:0000303" key="10">
    <source>
    </source>
</evidence>
<evidence type="ECO:0000305" key="11"/>
<evidence type="ECO:0000312" key="12">
    <source>
        <dbReference type="HGNC" id="HGNC:21535"/>
    </source>
</evidence>
<evidence type="ECO:0007744" key="13">
    <source>
        <dbReference type="PDB" id="6LSS"/>
    </source>
</evidence>
<evidence type="ECO:0007744" key="14">
    <source>
        <dbReference type="PDB" id="6LU8"/>
    </source>
</evidence>
<evidence type="ECO:0007744" key="15">
    <source>
    </source>
</evidence>
<evidence type="ECO:0007744" key="16">
    <source>
    </source>
</evidence>
<evidence type="ECO:0007744" key="17">
    <source>
    </source>
</evidence>
<evidence type="ECO:0007744" key="18">
    <source>
    </source>
</evidence>
<evidence type="ECO:0007744" key="19">
    <source>
    </source>
</evidence>
<evidence type="ECO:0007744" key="20">
    <source>
    </source>
</evidence>
<evidence type="ECO:0007744" key="21">
    <source>
    </source>
</evidence>
<accession>Q9BZE4</accession>
<accession>B3KMC5</accession>
<accession>B4DY13</accession>
<accession>B7Z7A3</accession>
<accession>O95446</accession>
<accession>Q5T3R8</accession>
<accession>Q9NVJ8</accession>
<keyword id="KW-0002">3D-structure</keyword>
<keyword id="KW-0007">Acetylation</keyword>
<keyword id="KW-0025">Alternative splicing</keyword>
<keyword id="KW-0903">Direct protein sequencing</keyword>
<keyword id="KW-0342">GTP-binding</keyword>
<keyword id="KW-1017">Isopeptide bond</keyword>
<keyword id="KW-0547">Nucleotide-binding</keyword>
<keyword id="KW-0539">Nucleus</keyword>
<keyword id="KW-0597">Phosphoprotein</keyword>
<keyword id="KW-1267">Proteomics identification</keyword>
<keyword id="KW-1185">Reference proteome</keyword>
<keyword id="KW-0690">Ribosome biogenesis</keyword>
<keyword id="KW-0832">Ubl conjugation</keyword>
<name>GTPB4_HUMAN</name>
<protein>
    <recommendedName>
        <fullName>GTP-binding protein 4</fullName>
    </recommendedName>
    <alternativeName>
        <fullName>Chronic renal failure gene protein</fullName>
    </alternativeName>
    <alternativeName>
        <fullName>GTP-binding protein NGB</fullName>
    </alternativeName>
    <alternativeName>
        <fullName>Nucleolar GTP-binding protein 1</fullName>
    </alternativeName>
</protein>
<feature type="initiator methionine" description="Removed" evidence="9">
    <location>
        <position position="1"/>
    </location>
</feature>
<feature type="chain" id="PRO_0000195023" description="GTP-binding protein 4">
    <location>
        <begin position="2"/>
        <end position="634"/>
    </location>
</feature>
<feature type="domain" description="OBG-type G" evidence="1">
    <location>
        <begin position="169"/>
        <end position="340"/>
    </location>
</feature>
<feature type="region of interest" description="Disordered" evidence="2">
    <location>
        <begin position="495"/>
        <end position="517"/>
    </location>
</feature>
<feature type="region of interest" description="Disordered" evidence="2">
    <location>
        <begin position="529"/>
        <end position="634"/>
    </location>
</feature>
<feature type="compositionally biased region" description="Basic residues" evidence="2">
    <location>
        <begin position="544"/>
        <end position="554"/>
    </location>
</feature>
<feature type="compositionally biased region" description="Polar residues" evidence="2">
    <location>
        <begin position="560"/>
        <end position="572"/>
    </location>
</feature>
<feature type="compositionally biased region" description="Basic and acidic residues" evidence="2">
    <location>
        <begin position="573"/>
        <end position="585"/>
    </location>
</feature>
<feature type="compositionally biased region" description="Basic residues" evidence="2">
    <location>
        <begin position="586"/>
        <end position="604"/>
    </location>
</feature>
<feature type="compositionally biased region" description="Basic and acidic residues" evidence="2">
    <location>
        <begin position="605"/>
        <end position="618"/>
    </location>
</feature>
<feature type="compositionally biased region" description="Basic residues" evidence="2">
    <location>
        <begin position="619"/>
        <end position="634"/>
    </location>
</feature>
<feature type="binding site" evidence="1">
    <location>
        <begin position="175"/>
        <end position="182"/>
    </location>
    <ligand>
        <name>GTP</name>
        <dbReference type="ChEBI" id="CHEBI:37565"/>
    </ligand>
</feature>
<feature type="binding site" evidence="1">
    <location>
        <begin position="221"/>
        <end position="225"/>
    </location>
    <ligand>
        <name>GTP</name>
        <dbReference type="ChEBI" id="CHEBI:37565"/>
    </ligand>
</feature>
<feature type="binding site" evidence="1">
    <location>
        <begin position="289"/>
        <end position="292"/>
    </location>
    <ligand>
        <name>GTP</name>
        <dbReference type="ChEBI" id="CHEBI:37565"/>
    </ligand>
</feature>
<feature type="modified residue" description="N-acetylalanine" evidence="9">
    <location>
        <position position="2"/>
    </location>
</feature>
<feature type="modified residue" description="N6-acetyllysine; alternate" evidence="16">
    <location>
        <position position="103"/>
    </location>
</feature>
<feature type="modified residue" description="Phosphoserine" evidence="20">
    <location>
        <position position="122"/>
    </location>
</feature>
<feature type="modified residue" description="Phosphoserine" evidence="15 17 18 19">
    <location>
        <position position="468"/>
    </location>
</feature>
<feature type="modified residue" description="Phosphoserine" evidence="15 17 18 19">
    <location>
        <position position="470"/>
    </location>
</feature>
<feature type="modified residue" description="Phosphoserine" evidence="15 17 18">
    <location>
        <position position="472"/>
    </location>
</feature>
<feature type="modified residue" description="N6-acetyllysine" evidence="16">
    <location>
        <position position="522"/>
    </location>
</feature>
<feature type="modified residue" description="Phosphoserine" evidence="15">
    <location>
        <position position="558"/>
    </location>
</feature>
<feature type="cross-link" description="Glycyl lysine isopeptide (Lys-Gly) (interchain with G-Cter in SUMO2); alternate" evidence="21">
    <location>
        <position position="103"/>
    </location>
</feature>
<feature type="cross-link" description="Glycyl lysine isopeptide (Lys-Gly) (interchain with G-Cter in SUMO2)" evidence="21">
    <location>
        <position position="332"/>
    </location>
</feature>
<feature type="cross-link" description="Glycyl lysine isopeptide (Lys-Gly) (interchain with G-Cter in SUMO2)" evidence="21">
    <location>
        <position position="534"/>
    </location>
</feature>
<feature type="splice variant" id="VSP_056146" description="In isoform 3." evidence="11">
    <location>
        <begin position="1"/>
        <end position="116"/>
    </location>
</feature>
<feature type="splice variant" id="VSP_056147" description="In isoform 2." evidence="10">
    <location>
        <begin position="1"/>
        <end position="47"/>
    </location>
</feature>
<feature type="sequence variant" id="VAR_068801" description="In dbSNP:rs3207775." evidence="5">
    <original>R</original>
    <variation>H</variation>
    <location>
        <position position="525"/>
    </location>
</feature>
<feature type="sequence conflict" description="In Ref. 1; AAD09830." evidence="11" ref="1">
    <location>
        <position position="593"/>
    </location>
</feature>
<dbReference type="EMBL" id="AF120334">
    <property type="protein sequence ID" value="AAD09830.1"/>
    <property type="molecule type" value="mRNA"/>
</dbReference>
<dbReference type="EMBL" id="AF325353">
    <property type="protein sequence ID" value="AAK13444.1"/>
    <property type="molecule type" value="mRNA"/>
</dbReference>
<dbReference type="EMBL" id="AK001548">
    <property type="protein sequence ID" value="BAG50937.1"/>
    <property type="molecule type" value="mRNA"/>
</dbReference>
<dbReference type="EMBL" id="AK001552">
    <property type="protein sequence ID" value="BAA91752.1"/>
    <property type="molecule type" value="mRNA"/>
</dbReference>
<dbReference type="EMBL" id="AK301721">
    <property type="protein sequence ID" value="BAH13539.1"/>
    <property type="molecule type" value="mRNA"/>
</dbReference>
<dbReference type="EMBL" id="AK302219">
    <property type="protein sequence ID" value="BAG63575.1"/>
    <property type="molecule type" value="mRNA"/>
</dbReference>
<dbReference type="EMBL" id="AC022536">
    <property type="status" value="NOT_ANNOTATED_CDS"/>
    <property type="molecule type" value="Genomic_DNA"/>
</dbReference>
<dbReference type="EMBL" id="AL359878">
    <property type="status" value="NOT_ANNOTATED_CDS"/>
    <property type="molecule type" value="Genomic_DNA"/>
</dbReference>
<dbReference type="EMBL" id="CH471072">
    <property type="protein sequence ID" value="EAW86526.1"/>
    <property type="molecule type" value="Genomic_DNA"/>
</dbReference>
<dbReference type="EMBL" id="BC038975">
    <property type="protein sequence ID" value="AAH38975.1"/>
    <property type="molecule type" value="mRNA"/>
</dbReference>
<dbReference type="CCDS" id="CCDS31132.1">
    <molecule id="Q9BZE4-1"/>
</dbReference>
<dbReference type="RefSeq" id="NP_036473.2">
    <molecule id="Q9BZE4-1"/>
    <property type="nucleotide sequence ID" value="NM_012341.3"/>
</dbReference>
<dbReference type="RefSeq" id="XP_047280888.1">
    <molecule id="Q9BZE4-2"/>
    <property type="nucleotide sequence ID" value="XM_047424932.1"/>
</dbReference>
<dbReference type="RefSeq" id="XP_054221349.1">
    <molecule id="Q9BZE4-2"/>
    <property type="nucleotide sequence ID" value="XM_054365374.1"/>
</dbReference>
<dbReference type="PDB" id="6LSS">
    <property type="method" value="EM"/>
    <property type="resolution" value="3.23 A"/>
    <property type="chains" value="4=1-634"/>
</dbReference>
<dbReference type="PDB" id="6LU8">
    <property type="method" value="EM"/>
    <property type="resolution" value="3.13 A"/>
    <property type="chains" value="4=1-634"/>
</dbReference>
<dbReference type="PDB" id="8FKP">
    <property type="method" value="EM"/>
    <property type="resolution" value="2.85 A"/>
    <property type="chains" value="SR=1-634"/>
</dbReference>
<dbReference type="PDB" id="8FKQ">
    <property type="method" value="EM"/>
    <property type="resolution" value="2.76 A"/>
    <property type="chains" value="SR=1-634"/>
</dbReference>
<dbReference type="PDB" id="8FKR">
    <property type="method" value="EM"/>
    <property type="resolution" value="2.89 A"/>
    <property type="chains" value="SR=1-634"/>
</dbReference>
<dbReference type="PDB" id="8FKS">
    <property type="method" value="EM"/>
    <property type="resolution" value="2.88 A"/>
    <property type="chains" value="SR=1-634"/>
</dbReference>
<dbReference type="PDB" id="8FKT">
    <property type="method" value="EM"/>
    <property type="resolution" value="2.81 A"/>
    <property type="chains" value="SR=1-634"/>
</dbReference>
<dbReference type="PDB" id="8FKU">
    <property type="method" value="EM"/>
    <property type="resolution" value="2.82 A"/>
    <property type="chains" value="SR=1-634"/>
</dbReference>
<dbReference type="PDB" id="8FKV">
    <property type="method" value="EM"/>
    <property type="resolution" value="2.47 A"/>
    <property type="chains" value="SR=1-634"/>
</dbReference>
<dbReference type="PDB" id="8FKW">
    <property type="method" value="EM"/>
    <property type="resolution" value="2.50 A"/>
    <property type="chains" value="SR=1-634"/>
</dbReference>
<dbReference type="PDB" id="8FKX">
    <property type="method" value="EM"/>
    <property type="resolution" value="2.59 A"/>
    <property type="chains" value="SR=1-634"/>
</dbReference>
<dbReference type="PDB" id="8FKY">
    <property type="method" value="EM"/>
    <property type="resolution" value="2.67 A"/>
    <property type="chains" value="SR=1-634"/>
</dbReference>
<dbReference type="PDB" id="8FKZ">
    <property type="method" value="EM"/>
    <property type="resolution" value="3.04 A"/>
    <property type="chains" value="SR=1-634"/>
</dbReference>
<dbReference type="PDB" id="8FL0">
    <property type="method" value="EM"/>
    <property type="resolution" value="2.91 A"/>
    <property type="chains" value="SR=1-634"/>
</dbReference>
<dbReference type="PDB" id="8FL2">
    <property type="method" value="EM"/>
    <property type="resolution" value="2.67 A"/>
    <property type="chains" value="SR=1-634"/>
</dbReference>
<dbReference type="PDB" id="8FL3">
    <property type="method" value="EM"/>
    <property type="resolution" value="2.53 A"/>
    <property type="chains" value="SR=1-634"/>
</dbReference>
<dbReference type="PDB" id="8FL4">
    <property type="method" value="EM"/>
    <property type="resolution" value="2.89 A"/>
    <property type="chains" value="SR=1-634"/>
</dbReference>
<dbReference type="PDB" id="8FL6">
    <property type="method" value="EM"/>
    <property type="resolution" value="2.62 A"/>
    <property type="chains" value="SR=1-634"/>
</dbReference>
<dbReference type="PDB" id="8FL7">
    <property type="method" value="EM"/>
    <property type="resolution" value="2.55 A"/>
    <property type="chains" value="SR=1-634"/>
</dbReference>
<dbReference type="PDB" id="8FL9">
    <property type="method" value="EM"/>
    <property type="resolution" value="2.75 A"/>
    <property type="chains" value="SR=1-634"/>
</dbReference>
<dbReference type="PDB" id="8FLA">
    <property type="method" value="EM"/>
    <property type="resolution" value="2.63 A"/>
    <property type="chains" value="SR=1-634"/>
</dbReference>
<dbReference type="PDB" id="8FLB">
    <property type="method" value="EM"/>
    <property type="resolution" value="2.55 A"/>
    <property type="chains" value="SR=1-634"/>
</dbReference>
<dbReference type="PDB" id="8FLC">
    <property type="method" value="EM"/>
    <property type="resolution" value="2.76 A"/>
    <property type="chains" value="SR=1-634"/>
</dbReference>
<dbReference type="PDB" id="8FLD">
    <property type="method" value="EM"/>
    <property type="resolution" value="2.58 A"/>
    <property type="chains" value="SR=1-634"/>
</dbReference>
<dbReference type="PDB" id="8FLE">
    <property type="method" value="EM"/>
    <property type="resolution" value="2.48 A"/>
    <property type="chains" value="SR=1-634"/>
</dbReference>
<dbReference type="PDB" id="8FLF">
    <property type="method" value="EM"/>
    <property type="resolution" value="2.65 A"/>
    <property type="chains" value="SR=1-634"/>
</dbReference>
<dbReference type="PDB" id="8IDT">
    <property type="method" value="EM"/>
    <property type="resolution" value="2.80 A"/>
    <property type="chains" value="4=1-634"/>
</dbReference>
<dbReference type="PDB" id="8IDY">
    <property type="method" value="EM"/>
    <property type="resolution" value="3.00 A"/>
    <property type="chains" value="4=1-634"/>
</dbReference>
<dbReference type="PDB" id="8IE3">
    <property type="method" value="EM"/>
    <property type="resolution" value="3.30 A"/>
    <property type="chains" value="4=1-634"/>
</dbReference>
<dbReference type="PDB" id="8INE">
    <property type="method" value="EM"/>
    <property type="resolution" value="3.20 A"/>
    <property type="chains" value="4=1-634"/>
</dbReference>
<dbReference type="PDB" id="8INF">
    <property type="method" value="EM"/>
    <property type="resolution" value="3.00 A"/>
    <property type="chains" value="4=1-634"/>
</dbReference>
<dbReference type="PDB" id="8INK">
    <property type="method" value="EM"/>
    <property type="resolution" value="3.20 A"/>
    <property type="chains" value="4=1-634"/>
</dbReference>
<dbReference type="PDB" id="8IPD">
    <property type="method" value="EM"/>
    <property type="resolution" value="3.20 A"/>
    <property type="chains" value="4=1-634"/>
</dbReference>
<dbReference type="PDB" id="8IPX">
    <property type="method" value="EM"/>
    <property type="resolution" value="4.30 A"/>
    <property type="chains" value="4=1-634"/>
</dbReference>
<dbReference type="PDB" id="8IPY">
    <property type="method" value="EM"/>
    <property type="resolution" value="3.20 A"/>
    <property type="chains" value="4=1-634"/>
</dbReference>
<dbReference type="PDB" id="8IR1">
    <property type="method" value="EM"/>
    <property type="resolution" value="3.30 A"/>
    <property type="chains" value="4=1-634"/>
</dbReference>
<dbReference type="PDB" id="8IR3">
    <property type="method" value="EM"/>
    <property type="resolution" value="3.50 A"/>
    <property type="chains" value="4=1-634"/>
</dbReference>
<dbReference type="PDB" id="8RL2">
    <property type="method" value="EM"/>
    <property type="resolution" value="2.84 A"/>
    <property type="chains" value="CD=1-634"/>
</dbReference>
<dbReference type="PDBsum" id="6LSS"/>
<dbReference type="PDBsum" id="6LU8"/>
<dbReference type="PDBsum" id="8FKP"/>
<dbReference type="PDBsum" id="8FKQ"/>
<dbReference type="PDBsum" id="8FKR"/>
<dbReference type="PDBsum" id="8FKS"/>
<dbReference type="PDBsum" id="8FKT"/>
<dbReference type="PDBsum" id="8FKU"/>
<dbReference type="PDBsum" id="8FKV"/>
<dbReference type="PDBsum" id="8FKW"/>
<dbReference type="PDBsum" id="8FKX"/>
<dbReference type="PDBsum" id="8FKY"/>
<dbReference type="PDBsum" id="8FKZ"/>
<dbReference type="PDBsum" id="8FL0"/>
<dbReference type="PDBsum" id="8FL2"/>
<dbReference type="PDBsum" id="8FL3"/>
<dbReference type="PDBsum" id="8FL4"/>
<dbReference type="PDBsum" id="8FL6"/>
<dbReference type="PDBsum" id="8FL7"/>
<dbReference type="PDBsum" id="8FL9"/>
<dbReference type="PDBsum" id="8FLA"/>
<dbReference type="PDBsum" id="8FLB"/>
<dbReference type="PDBsum" id="8FLC"/>
<dbReference type="PDBsum" id="8FLD"/>
<dbReference type="PDBsum" id="8FLE"/>
<dbReference type="PDBsum" id="8FLF"/>
<dbReference type="PDBsum" id="8IDT"/>
<dbReference type="PDBsum" id="8IDY"/>
<dbReference type="PDBsum" id="8IE3"/>
<dbReference type="PDBsum" id="8INE"/>
<dbReference type="PDBsum" id="8INF"/>
<dbReference type="PDBsum" id="8INK"/>
<dbReference type="PDBsum" id="8IPD"/>
<dbReference type="PDBsum" id="8IPX"/>
<dbReference type="PDBsum" id="8IPY"/>
<dbReference type="PDBsum" id="8IR1"/>
<dbReference type="PDBsum" id="8IR3"/>
<dbReference type="PDBsum" id="8RL2"/>
<dbReference type="EMDB" id="EMD-19330"/>
<dbReference type="EMDB" id="EMD-29252"/>
<dbReference type="EMDB" id="EMD-29253"/>
<dbReference type="EMDB" id="EMD-29254"/>
<dbReference type="EMDB" id="EMD-29255"/>
<dbReference type="EMDB" id="EMD-29256"/>
<dbReference type="EMDB" id="EMD-29257"/>
<dbReference type="EMDB" id="EMD-29258"/>
<dbReference type="EMDB" id="EMD-29259"/>
<dbReference type="EMDB" id="EMD-29260"/>
<dbReference type="EMDB" id="EMD-29261"/>
<dbReference type="EMDB" id="EMD-29262"/>
<dbReference type="EMDB" id="EMD-29263"/>
<dbReference type="EMDB" id="EMD-29265"/>
<dbReference type="EMDB" id="EMD-29266"/>
<dbReference type="EMDB" id="EMD-29267"/>
<dbReference type="EMDB" id="EMD-29268"/>
<dbReference type="EMDB" id="EMD-29269"/>
<dbReference type="EMDB" id="EMD-29271"/>
<dbReference type="EMDB" id="EMD-29272"/>
<dbReference type="EMDB" id="EMD-29273"/>
<dbReference type="EMDB" id="EMD-29274"/>
<dbReference type="EMDB" id="EMD-29275"/>
<dbReference type="EMDB" id="EMD-29276"/>
<dbReference type="EMDB" id="EMD-29277"/>
<dbReference type="EMDB" id="EMD-35370"/>
<dbReference type="EMDB" id="EMD-35371"/>
<dbReference type="EMDB" id="EMD-35375"/>
<dbReference type="EMDB" id="EMD-35596"/>
<dbReference type="EMDB" id="EMD-35597"/>
<dbReference type="EMDB" id="EMD-35599"/>
<dbReference type="EMDB" id="EMD-35639"/>
<dbReference type="EMDB" id="EMD-35649"/>
<dbReference type="EMDB" id="EMD-35651"/>
<dbReference type="EMDB" id="EMD-35672"/>
<dbReference type="EMDB" id="EMD-35673"/>
<dbReference type="SMR" id="Q9BZE4"/>
<dbReference type="BioGRID" id="117104">
    <property type="interactions" value="443"/>
</dbReference>
<dbReference type="FunCoup" id="Q9BZE4">
    <property type="interactions" value="4364"/>
</dbReference>
<dbReference type="IntAct" id="Q9BZE4">
    <property type="interactions" value="239"/>
</dbReference>
<dbReference type="MINT" id="Q9BZE4"/>
<dbReference type="STRING" id="9606.ENSP00000354040"/>
<dbReference type="ChEMBL" id="CHEMBL4105780"/>
<dbReference type="GlyGen" id="Q9BZE4">
    <property type="glycosylation" value="1 site, 1 O-linked glycan (1 site)"/>
</dbReference>
<dbReference type="iPTMnet" id="Q9BZE4"/>
<dbReference type="PhosphoSitePlus" id="Q9BZE4"/>
<dbReference type="SwissPalm" id="Q9BZE4"/>
<dbReference type="BioMuta" id="GTPBP4"/>
<dbReference type="DMDM" id="17368711"/>
<dbReference type="jPOST" id="Q9BZE4"/>
<dbReference type="MassIVE" id="Q9BZE4"/>
<dbReference type="PaxDb" id="9606-ENSP00000354040"/>
<dbReference type="PeptideAtlas" id="Q9BZE4"/>
<dbReference type="ProteomicsDB" id="5488"/>
<dbReference type="ProteomicsDB" id="6843"/>
<dbReference type="ProteomicsDB" id="79822">
    <molecule id="Q9BZE4-1"/>
</dbReference>
<dbReference type="Pumba" id="Q9BZE4"/>
<dbReference type="Antibodypedia" id="23768">
    <property type="antibodies" value="184 antibodies from 33 providers"/>
</dbReference>
<dbReference type="DNASU" id="23560"/>
<dbReference type="Ensembl" id="ENST00000360803.9">
    <molecule id="Q9BZE4-1"/>
    <property type="protein sequence ID" value="ENSP00000354040.4"/>
    <property type="gene ID" value="ENSG00000107937.19"/>
</dbReference>
<dbReference type="GeneID" id="23560"/>
<dbReference type="KEGG" id="hsa:23560"/>
<dbReference type="MANE-Select" id="ENST00000360803.9">
    <property type="protein sequence ID" value="ENSP00000354040.4"/>
    <property type="RefSeq nucleotide sequence ID" value="NM_012341.3"/>
    <property type="RefSeq protein sequence ID" value="NP_036473.2"/>
</dbReference>
<dbReference type="UCSC" id="uc001ift.4">
    <molecule id="Q9BZE4-1"/>
    <property type="organism name" value="human"/>
</dbReference>
<dbReference type="AGR" id="HGNC:21535"/>
<dbReference type="CTD" id="23560"/>
<dbReference type="DisGeNET" id="23560"/>
<dbReference type="GeneCards" id="GTPBP4"/>
<dbReference type="HGNC" id="HGNC:21535">
    <property type="gene designation" value="GTPBP4"/>
</dbReference>
<dbReference type="HPA" id="ENSG00000107937">
    <property type="expression patterns" value="Low tissue specificity"/>
</dbReference>
<dbReference type="MIM" id="619169">
    <property type="type" value="gene"/>
</dbReference>
<dbReference type="neXtProt" id="NX_Q9BZE4"/>
<dbReference type="OpenTargets" id="ENSG00000107937"/>
<dbReference type="PharmGKB" id="PA134922009"/>
<dbReference type="VEuPathDB" id="HostDB:ENSG00000107937"/>
<dbReference type="eggNOG" id="KOG1490">
    <property type="taxonomic scope" value="Eukaryota"/>
</dbReference>
<dbReference type="GeneTree" id="ENSGT00390000018475"/>
<dbReference type="HOGENOM" id="CLU_011784_4_1_1"/>
<dbReference type="InParanoid" id="Q9BZE4"/>
<dbReference type="OMA" id="EWKNDVM"/>
<dbReference type="OrthoDB" id="415015at2759"/>
<dbReference type="PAN-GO" id="Q9BZE4">
    <property type="GO annotations" value="4 GO annotations based on evolutionary models"/>
</dbReference>
<dbReference type="PhylomeDB" id="Q9BZE4"/>
<dbReference type="TreeFam" id="TF300430"/>
<dbReference type="PathwayCommons" id="Q9BZE4"/>
<dbReference type="SignaLink" id="Q9BZE4"/>
<dbReference type="BioGRID-ORCS" id="23560">
    <property type="hits" value="853 hits in 1166 CRISPR screens"/>
</dbReference>
<dbReference type="CD-CODE" id="232F8A39">
    <property type="entry name" value="P-body"/>
</dbReference>
<dbReference type="CD-CODE" id="91857CE7">
    <property type="entry name" value="Nucleolus"/>
</dbReference>
<dbReference type="ChiTaRS" id="GTPBP4">
    <property type="organism name" value="human"/>
</dbReference>
<dbReference type="GeneWiki" id="GTPBP4"/>
<dbReference type="GenomeRNAi" id="23560"/>
<dbReference type="Pharos" id="Q9BZE4">
    <property type="development level" value="Tchem"/>
</dbReference>
<dbReference type="PRO" id="PR:Q9BZE4"/>
<dbReference type="Proteomes" id="UP000005640">
    <property type="component" value="Chromosome 10"/>
</dbReference>
<dbReference type="RNAct" id="Q9BZE4">
    <property type="molecule type" value="protein"/>
</dbReference>
<dbReference type="Bgee" id="ENSG00000107937">
    <property type="expression patterns" value="Expressed in sperm and 204 other cell types or tissues"/>
</dbReference>
<dbReference type="ExpressionAtlas" id="Q9BZE4">
    <property type="expression patterns" value="baseline and differential"/>
</dbReference>
<dbReference type="GO" id="GO:0005737">
    <property type="term" value="C:cytoplasm"/>
    <property type="evidence" value="ECO:0000314"/>
    <property type="project" value="HGNC-UCL"/>
</dbReference>
<dbReference type="GO" id="GO:0005829">
    <property type="term" value="C:cytosol"/>
    <property type="evidence" value="ECO:0000314"/>
    <property type="project" value="HPA"/>
</dbReference>
<dbReference type="GO" id="GO:0016020">
    <property type="term" value="C:membrane"/>
    <property type="evidence" value="ECO:0007005"/>
    <property type="project" value="UniProtKB"/>
</dbReference>
<dbReference type="GO" id="GO:0031965">
    <property type="term" value="C:nuclear membrane"/>
    <property type="evidence" value="ECO:0000314"/>
    <property type="project" value="HPA"/>
</dbReference>
<dbReference type="GO" id="GO:0005730">
    <property type="term" value="C:nucleolus"/>
    <property type="evidence" value="ECO:0000314"/>
    <property type="project" value="HPA"/>
</dbReference>
<dbReference type="GO" id="GO:0005654">
    <property type="term" value="C:nucleoplasm"/>
    <property type="evidence" value="ECO:0000314"/>
    <property type="project" value="HPA"/>
</dbReference>
<dbReference type="GO" id="GO:0005634">
    <property type="term" value="C:nucleus"/>
    <property type="evidence" value="ECO:0000314"/>
    <property type="project" value="HGNC-UCL"/>
</dbReference>
<dbReference type="GO" id="GO:0048471">
    <property type="term" value="C:perinuclear region of cytoplasm"/>
    <property type="evidence" value="ECO:0000314"/>
    <property type="project" value="HGNC-UCL"/>
</dbReference>
<dbReference type="GO" id="GO:0005525">
    <property type="term" value="F:GTP binding"/>
    <property type="evidence" value="ECO:0000314"/>
    <property type="project" value="HGNC-UCL"/>
</dbReference>
<dbReference type="GO" id="GO:0003924">
    <property type="term" value="F:GTPase activity"/>
    <property type="evidence" value="ECO:0000314"/>
    <property type="project" value="HGNC-UCL"/>
</dbReference>
<dbReference type="GO" id="GO:1990275">
    <property type="term" value="F:preribosome binding"/>
    <property type="evidence" value="ECO:0000314"/>
    <property type="project" value="UniProtKB"/>
</dbReference>
<dbReference type="GO" id="GO:0003723">
    <property type="term" value="F:RNA binding"/>
    <property type="evidence" value="ECO:0007005"/>
    <property type="project" value="UniProtKB"/>
</dbReference>
<dbReference type="GO" id="GO:0000463">
    <property type="term" value="P:maturation of LSU-rRNA from tricistronic rRNA transcript (SSU-rRNA, 5.8S rRNA, LSU-rRNA)"/>
    <property type="evidence" value="ECO:0007669"/>
    <property type="project" value="Ensembl"/>
</dbReference>
<dbReference type="GO" id="GO:0030336">
    <property type="term" value="P:negative regulation of cell migration"/>
    <property type="evidence" value="ECO:0000314"/>
    <property type="project" value="HGNC-UCL"/>
</dbReference>
<dbReference type="GO" id="GO:0008285">
    <property type="term" value="P:negative regulation of cell population proliferation"/>
    <property type="evidence" value="ECO:0000315"/>
    <property type="project" value="HGNC-UCL"/>
</dbReference>
<dbReference type="GO" id="GO:0022408">
    <property type="term" value="P:negative regulation of cell-cell adhesion"/>
    <property type="evidence" value="ECO:0000314"/>
    <property type="project" value="HGNC-UCL"/>
</dbReference>
<dbReference type="GO" id="GO:0008156">
    <property type="term" value="P:negative regulation of DNA replication"/>
    <property type="evidence" value="ECO:0000315"/>
    <property type="project" value="HGNC-UCL"/>
</dbReference>
<dbReference type="GO" id="GO:0010972">
    <property type="term" value="P:negative regulation of G2/M transition of mitotic cell cycle"/>
    <property type="evidence" value="ECO:0000314"/>
    <property type="project" value="HGNC-UCL"/>
</dbReference>
<dbReference type="GO" id="GO:0031397">
    <property type="term" value="P:negative regulation of protein ubiquitination"/>
    <property type="evidence" value="ECO:0000314"/>
    <property type="project" value="HGNC-UCL"/>
</dbReference>
<dbReference type="GO" id="GO:0001649">
    <property type="term" value="P:osteoblast differentiation"/>
    <property type="evidence" value="ECO:0007005"/>
    <property type="project" value="UniProtKB"/>
</dbReference>
<dbReference type="GO" id="GO:0050821">
    <property type="term" value="P:protein stabilization"/>
    <property type="evidence" value="ECO:0000314"/>
    <property type="project" value="HGNC-UCL"/>
</dbReference>
<dbReference type="GO" id="GO:0042273">
    <property type="term" value="P:ribosomal large subunit biogenesis"/>
    <property type="evidence" value="ECO:0000314"/>
    <property type="project" value="UniProtKB"/>
</dbReference>
<dbReference type="CDD" id="cd01897">
    <property type="entry name" value="NOG"/>
    <property type="match status" value="1"/>
</dbReference>
<dbReference type="FunFam" id="1.20.120.1190:FF:000001">
    <property type="entry name" value="Nucleolar GTP-binding protein 1"/>
    <property type="match status" value="1"/>
</dbReference>
<dbReference type="FunFam" id="3.40.50.300:FF:000496">
    <property type="entry name" value="Nucleolar GTP-binding protein 1"/>
    <property type="match status" value="1"/>
</dbReference>
<dbReference type="Gene3D" id="1.20.120.1190">
    <property type="match status" value="1"/>
</dbReference>
<dbReference type="Gene3D" id="3.40.50.300">
    <property type="entry name" value="P-loop containing nucleotide triphosphate hydrolases"/>
    <property type="match status" value="1"/>
</dbReference>
<dbReference type="InterPro" id="IPR031167">
    <property type="entry name" value="G_OBG"/>
</dbReference>
<dbReference type="InterPro" id="IPR006073">
    <property type="entry name" value="GTP-bd"/>
</dbReference>
<dbReference type="InterPro" id="IPR024926">
    <property type="entry name" value="NOG1"/>
</dbReference>
<dbReference type="InterPro" id="IPR041623">
    <property type="entry name" value="NOG1_N"/>
</dbReference>
<dbReference type="InterPro" id="IPR010674">
    <property type="entry name" value="NOG1_Rossman_fold_dom"/>
</dbReference>
<dbReference type="InterPro" id="IPR012973">
    <property type="entry name" value="NOG_C"/>
</dbReference>
<dbReference type="InterPro" id="IPR027417">
    <property type="entry name" value="P-loop_NTPase"/>
</dbReference>
<dbReference type="InterPro" id="IPR005225">
    <property type="entry name" value="Small_GTP-bd"/>
</dbReference>
<dbReference type="NCBIfam" id="TIGR00231">
    <property type="entry name" value="small_GTP"/>
    <property type="match status" value="1"/>
</dbReference>
<dbReference type="PANTHER" id="PTHR45759">
    <property type="entry name" value="NUCLEOLAR GTP-BINDING PROTEIN 1"/>
    <property type="match status" value="1"/>
</dbReference>
<dbReference type="Pfam" id="PF06858">
    <property type="entry name" value="NOG1"/>
    <property type="match status" value="1"/>
</dbReference>
<dbReference type="Pfam" id="PF17835">
    <property type="entry name" value="NOG1_N"/>
    <property type="match status" value="1"/>
</dbReference>
<dbReference type="Pfam" id="PF08155">
    <property type="entry name" value="NOGCT"/>
    <property type="match status" value="1"/>
</dbReference>
<dbReference type="PIRSF" id="PIRSF038919">
    <property type="entry name" value="NOG1"/>
    <property type="match status" value="1"/>
</dbReference>
<dbReference type="PRINTS" id="PR00326">
    <property type="entry name" value="GTP1OBG"/>
</dbReference>
<dbReference type="SUPFAM" id="SSF52540">
    <property type="entry name" value="P-loop containing nucleoside triphosphate hydrolases"/>
    <property type="match status" value="1"/>
</dbReference>
<dbReference type="PROSITE" id="PS51710">
    <property type="entry name" value="G_OBG"/>
    <property type="match status" value="1"/>
</dbReference>
<reference key="1">
    <citation type="submission" date="1999-01" db="EMBL/GenBank/DDBJ databases">
        <title>Cloning and characterization of a novel GTP-binding protein, NGB.</title>
        <authorList>
            <person name="Cheng J.Q."/>
            <person name="Cao C.H."/>
            <person name="Testa J.R."/>
            <person name="Golemis E.A."/>
            <person name="Jiang C."/>
            <person name="Yuan W."/>
            <person name="Nicosia S.V."/>
        </authorList>
    </citation>
    <scope>NUCLEOTIDE SEQUENCE [MRNA] (ISOFORM 1)</scope>
</reference>
<reference key="2">
    <citation type="journal article" date="2001" name="J. Am. Soc. Nephrol.">
        <title>Identification of a novel nuclear guanosine triphosphate-binding protein differentially expressed in renal disease.</title>
        <authorList>
            <person name="Laping N.J."/>
            <person name="Olson B.A."/>
            <person name="Zhu Y."/>
        </authorList>
    </citation>
    <scope>NUCLEOTIDE SEQUENCE [MRNA] (ISOFORM 1)</scope>
    <scope>SUBCELLULAR LOCATION</scope>
    <source>
        <tissue>Kidney</tissue>
    </source>
</reference>
<reference key="3">
    <citation type="journal article" date="2004" name="Nat. Genet.">
        <title>Complete sequencing and characterization of 21,243 full-length human cDNAs.</title>
        <authorList>
            <person name="Ota T."/>
            <person name="Suzuki Y."/>
            <person name="Nishikawa T."/>
            <person name="Otsuki T."/>
            <person name="Sugiyama T."/>
            <person name="Irie R."/>
            <person name="Wakamatsu A."/>
            <person name="Hayashi K."/>
            <person name="Sato H."/>
            <person name="Nagai K."/>
            <person name="Kimura K."/>
            <person name="Makita H."/>
            <person name="Sekine M."/>
            <person name="Obayashi M."/>
            <person name="Nishi T."/>
            <person name="Shibahara T."/>
            <person name="Tanaka T."/>
            <person name="Ishii S."/>
            <person name="Yamamoto J."/>
            <person name="Saito K."/>
            <person name="Kawai Y."/>
            <person name="Isono Y."/>
            <person name="Nakamura Y."/>
            <person name="Nagahari K."/>
            <person name="Murakami K."/>
            <person name="Yasuda T."/>
            <person name="Iwayanagi T."/>
            <person name="Wagatsuma M."/>
            <person name="Shiratori A."/>
            <person name="Sudo H."/>
            <person name="Hosoiri T."/>
            <person name="Kaku Y."/>
            <person name="Kodaira H."/>
            <person name="Kondo H."/>
            <person name="Sugawara M."/>
            <person name="Takahashi M."/>
            <person name="Kanda K."/>
            <person name="Yokoi T."/>
            <person name="Furuya T."/>
            <person name="Kikkawa E."/>
            <person name="Omura Y."/>
            <person name="Abe K."/>
            <person name="Kamihara K."/>
            <person name="Katsuta N."/>
            <person name="Sato K."/>
            <person name="Tanikawa M."/>
            <person name="Yamazaki M."/>
            <person name="Ninomiya K."/>
            <person name="Ishibashi T."/>
            <person name="Yamashita H."/>
            <person name="Murakawa K."/>
            <person name="Fujimori K."/>
            <person name="Tanai H."/>
            <person name="Kimata M."/>
            <person name="Watanabe M."/>
            <person name="Hiraoka S."/>
            <person name="Chiba Y."/>
            <person name="Ishida S."/>
            <person name="Ono Y."/>
            <person name="Takiguchi S."/>
            <person name="Watanabe S."/>
            <person name="Yosida M."/>
            <person name="Hotuta T."/>
            <person name="Kusano J."/>
            <person name="Kanehori K."/>
            <person name="Takahashi-Fujii A."/>
            <person name="Hara H."/>
            <person name="Tanase T.-O."/>
            <person name="Nomura Y."/>
            <person name="Togiya S."/>
            <person name="Komai F."/>
            <person name="Hara R."/>
            <person name="Takeuchi K."/>
            <person name="Arita M."/>
            <person name="Imose N."/>
            <person name="Musashino K."/>
            <person name="Yuuki H."/>
            <person name="Oshima A."/>
            <person name="Sasaki N."/>
            <person name="Aotsuka S."/>
            <person name="Yoshikawa Y."/>
            <person name="Matsunawa H."/>
            <person name="Ichihara T."/>
            <person name="Shiohata N."/>
            <person name="Sano S."/>
            <person name="Moriya S."/>
            <person name="Momiyama H."/>
            <person name="Satoh N."/>
            <person name="Takami S."/>
            <person name="Terashima Y."/>
            <person name="Suzuki O."/>
            <person name="Nakagawa S."/>
            <person name="Senoh A."/>
            <person name="Mizoguchi H."/>
            <person name="Goto Y."/>
            <person name="Shimizu F."/>
            <person name="Wakebe H."/>
            <person name="Hishigaki H."/>
            <person name="Watanabe T."/>
            <person name="Sugiyama A."/>
            <person name="Takemoto M."/>
            <person name="Kawakami B."/>
            <person name="Yamazaki M."/>
            <person name="Watanabe K."/>
            <person name="Kumagai A."/>
            <person name="Itakura S."/>
            <person name="Fukuzumi Y."/>
            <person name="Fujimori Y."/>
            <person name="Komiyama M."/>
            <person name="Tashiro H."/>
            <person name="Tanigami A."/>
            <person name="Fujiwara T."/>
            <person name="Ono T."/>
            <person name="Yamada K."/>
            <person name="Fujii Y."/>
            <person name="Ozaki K."/>
            <person name="Hirao M."/>
            <person name="Ohmori Y."/>
            <person name="Kawabata A."/>
            <person name="Hikiji T."/>
            <person name="Kobatake N."/>
            <person name="Inagaki H."/>
            <person name="Ikema Y."/>
            <person name="Okamoto S."/>
            <person name="Okitani R."/>
            <person name="Kawakami T."/>
            <person name="Noguchi S."/>
            <person name="Itoh T."/>
            <person name="Shigeta K."/>
            <person name="Senba T."/>
            <person name="Matsumura K."/>
            <person name="Nakajima Y."/>
            <person name="Mizuno T."/>
            <person name="Morinaga M."/>
            <person name="Sasaki M."/>
            <person name="Togashi T."/>
            <person name="Oyama M."/>
            <person name="Hata H."/>
            <person name="Watanabe M."/>
            <person name="Komatsu T."/>
            <person name="Mizushima-Sugano J."/>
            <person name="Satoh T."/>
            <person name="Shirai Y."/>
            <person name="Takahashi Y."/>
            <person name="Nakagawa K."/>
            <person name="Okumura K."/>
            <person name="Nagase T."/>
            <person name="Nomura N."/>
            <person name="Kikuchi H."/>
            <person name="Masuho Y."/>
            <person name="Yamashita R."/>
            <person name="Nakai K."/>
            <person name="Yada T."/>
            <person name="Nakamura Y."/>
            <person name="Ohara O."/>
            <person name="Isogai T."/>
            <person name="Sugano S."/>
        </authorList>
    </citation>
    <scope>NUCLEOTIDE SEQUENCE [LARGE SCALE MRNA] (ISOFORMS 1 AND 2)</scope>
    <scope>VARIANT HIS-525</scope>
    <source>
        <tissue>Testis</tissue>
    </source>
</reference>
<reference key="4">
    <citation type="journal article" date="2004" name="Nature">
        <title>The DNA sequence and comparative analysis of human chromosome 10.</title>
        <authorList>
            <person name="Deloukas P."/>
            <person name="Earthrowl M.E."/>
            <person name="Grafham D.V."/>
            <person name="Rubenfield M."/>
            <person name="French L."/>
            <person name="Steward C.A."/>
            <person name="Sims S.K."/>
            <person name="Jones M.C."/>
            <person name="Searle S."/>
            <person name="Scott C."/>
            <person name="Howe K."/>
            <person name="Hunt S.E."/>
            <person name="Andrews T.D."/>
            <person name="Gilbert J.G.R."/>
            <person name="Swarbreck D."/>
            <person name="Ashurst J.L."/>
            <person name="Taylor A."/>
            <person name="Battles J."/>
            <person name="Bird C.P."/>
            <person name="Ainscough R."/>
            <person name="Almeida J.P."/>
            <person name="Ashwell R.I.S."/>
            <person name="Ambrose K.D."/>
            <person name="Babbage A.K."/>
            <person name="Bagguley C.L."/>
            <person name="Bailey J."/>
            <person name="Banerjee R."/>
            <person name="Bates K."/>
            <person name="Beasley H."/>
            <person name="Bray-Allen S."/>
            <person name="Brown A.J."/>
            <person name="Brown J.Y."/>
            <person name="Burford D.C."/>
            <person name="Burrill W."/>
            <person name="Burton J."/>
            <person name="Cahill P."/>
            <person name="Camire D."/>
            <person name="Carter N.P."/>
            <person name="Chapman J.C."/>
            <person name="Clark S.Y."/>
            <person name="Clarke G."/>
            <person name="Clee C.M."/>
            <person name="Clegg S."/>
            <person name="Corby N."/>
            <person name="Coulson A."/>
            <person name="Dhami P."/>
            <person name="Dutta I."/>
            <person name="Dunn M."/>
            <person name="Faulkner L."/>
            <person name="Frankish A."/>
            <person name="Frankland J.A."/>
            <person name="Garner P."/>
            <person name="Garnett J."/>
            <person name="Gribble S."/>
            <person name="Griffiths C."/>
            <person name="Grocock R."/>
            <person name="Gustafson E."/>
            <person name="Hammond S."/>
            <person name="Harley J.L."/>
            <person name="Hart E."/>
            <person name="Heath P.D."/>
            <person name="Ho T.P."/>
            <person name="Hopkins B."/>
            <person name="Horne J."/>
            <person name="Howden P.J."/>
            <person name="Huckle E."/>
            <person name="Hynds C."/>
            <person name="Johnson C."/>
            <person name="Johnson D."/>
            <person name="Kana A."/>
            <person name="Kay M."/>
            <person name="Kimberley A.M."/>
            <person name="Kershaw J.K."/>
            <person name="Kokkinaki M."/>
            <person name="Laird G.K."/>
            <person name="Lawlor S."/>
            <person name="Lee H.M."/>
            <person name="Leongamornlert D.A."/>
            <person name="Laird G."/>
            <person name="Lloyd C."/>
            <person name="Lloyd D.M."/>
            <person name="Loveland J."/>
            <person name="Lovell J."/>
            <person name="McLaren S."/>
            <person name="McLay K.E."/>
            <person name="McMurray A."/>
            <person name="Mashreghi-Mohammadi M."/>
            <person name="Matthews L."/>
            <person name="Milne S."/>
            <person name="Nickerson T."/>
            <person name="Nguyen M."/>
            <person name="Overton-Larty E."/>
            <person name="Palmer S.A."/>
            <person name="Pearce A.V."/>
            <person name="Peck A.I."/>
            <person name="Pelan S."/>
            <person name="Phillimore B."/>
            <person name="Porter K."/>
            <person name="Rice C.M."/>
            <person name="Rogosin A."/>
            <person name="Ross M.T."/>
            <person name="Sarafidou T."/>
            <person name="Sehra H.K."/>
            <person name="Shownkeen R."/>
            <person name="Skuce C.D."/>
            <person name="Smith M."/>
            <person name="Standring L."/>
            <person name="Sycamore N."/>
            <person name="Tester J."/>
            <person name="Thorpe A."/>
            <person name="Torcasso W."/>
            <person name="Tracey A."/>
            <person name="Tromans A."/>
            <person name="Tsolas J."/>
            <person name="Wall M."/>
            <person name="Walsh J."/>
            <person name="Wang H."/>
            <person name="Weinstock K."/>
            <person name="West A.P."/>
            <person name="Willey D.L."/>
            <person name="Whitehead S.L."/>
            <person name="Wilming L."/>
            <person name="Wray P.W."/>
            <person name="Young L."/>
            <person name="Chen Y."/>
            <person name="Lovering R.C."/>
            <person name="Moschonas N.K."/>
            <person name="Siebert R."/>
            <person name="Fechtel K."/>
            <person name="Bentley D."/>
            <person name="Durbin R.M."/>
            <person name="Hubbard T."/>
            <person name="Doucette-Stamm L."/>
            <person name="Beck S."/>
            <person name="Smith D.R."/>
            <person name="Rogers J."/>
        </authorList>
    </citation>
    <scope>NUCLEOTIDE SEQUENCE [LARGE SCALE GENOMIC DNA]</scope>
</reference>
<reference key="5">
    <citation type="submission" date="2005-09" db="EMBL/GenBank/DDBJ databases">
        <authorList>
            <person name="Mural R.J."/>
            <person name="Istrail S."/>
            <person name="Sutton G.G."/>
            <person name="Florea L."/>
            <person name="Halpern A.L."/>
            <person name="Mobarry C.M."/>
            <person name="Lippert R."/>
            <person name="Walenz B."/>
            <person name="Shatkay H."/>
            <person name="Dew I."/>
            <person name="Miller J.R."/>
            <person name="Flanigan M.J."/>
            <person name="Edwards N.J."/>
            <person name="Bolanos R."/>
            <person name="Fasulo D."/>
            <person name="Halldorsson B.V."/>
            <person name="Hannenhalli S."/>
            <person name="Turner R."/>
            <person name="Yooseph S."/>
            <person name="Lu F."/>
            <person name="Nusskern D.R."/>
            <person name="Shue B.C."/>
            <person name="Zheng X.H."/>
            <person name="Zhong F."/>
            <person name="Delcher A.L."/>
            <person name="Huson D.H."/>
            <person name="Kravitz S.A."/>
            <person name="Mouchard L."/>
            <person name="Reinert K."/>
            <person name="Remington K.A."/>
            <person name="Clark A.G."/>
            <person name="Waterman M.S."/>
            <person name="Eichler E.E."/>
            <person name="Adams M.D."/>
            <person name="Hunkapiller M.W."/>
            <person name="Myers E.W."/>
            <person name="Venter J.C."/>
        </authorList>
    </citation>
    <scope>NUCLEOTIDE SEQUENCE [LARGE SCALE GENOMIC DNA]</scope>
</reference>
<reference key="6">
    <citation type="journal article" date="2004" name="Genome Res.">
        <title>The status, quality, and expansion of the NIH full-length cDNA project: the Mammalian Gene Collection (MGC).</title>
        <authorList>
            <consortium name="The MGC Project Team"/>
        </authorList>
    </citation>
    <scope>NUCLEOTIDE SEQUENCE [LARGE SCALE MRNA] (ISOFORM 1)</scope>
    <source>
        <tissue>Uterus</tissue>
    </source>
</reference>
<reference key="7">
    <citation type="journal article" date="2002" name="Mol. Biol. Cell">
        <title>Functional proteomic analysis of human nucleolus.</title>
        <authorList>
            <person name="Scherl A."/>
            <person name="Coute Y."/>
            <person name="Deon C."/>
            <person name="Calle A."/>
            <person name="Kindbeiter K."/>
            <person name="Sanchez J.-C."/>
            <person name="Greco A."/>
            <person name="Hochstrasser D.F."/>
            <person name="Diaz J.-J."/>
        </authorList>
    </citation>
    <scope>SUBCELLULAR LOCATION [LARGE SCALE ANALYSIS]</scope>
    <source>
        <tissue>Cervix carcinoma</tissue>
    </source>
</reference>
<reference key="8">
    <citation type="submission" date="2004-10" db="UniProtKB">
        <authorList>
            <person name="Bienvenut W.V."/>
        </authorList>
    </citation>
    <scope>PROTEIN SEQUENCE OF 2-7; 9-25; 37-42; 53-71; 94-111; 119-125; 146-155; 161-169; 191-213; 217-248; 267-276; 296-330; 353-359; 372-384; 398-425; 429-448; 450-460 AND 526-544</scope>
    <scope>CLEAVAGE OF INITIATOR METHIONINE</scope>
    <scope>ACETYLATION AT ALA-2</scope>
    <scope>SUBCELLULAR LOCATION</scope>
    <scope>IDENTIFICATION BY MASS SPECTROMETRY</scope>
    <source>
        <tissue>Cervix carcinoma</tissue>
    </source>
</reference>
<reference key="9">
    <citation type="journal article" date="2006" name="Cell">
        <title>Global, in vivo, and site-specific phosphorylation dynamics in signaling networks.</title>
        <authorList>
            <person name="Olsen J.V."/>
            <person name="Blagoev B."/>
            <person name="Gnad F."/>
            <person name="Macek B."/>
            <person name="Kumar C."/>
            <person name="Mortensen P."/>
            <person name="Mann M."/>
        </authorList>
    </citation>
    <scope>IDENTIFICATION BY MASS SPECTROMETRY [LARGE SCALE ANALYSIS]</scope>
    <source>
        <tissue>Cervix carcinoma</tissue>
    </source>
</reference>
<reference key="10">
    <citation type="journal article" date="2008" name="Mol. Cell">
        <title>Kinase-selective enrichment enables quantitative phosphoproteomics of the kinome across the cell cycle.</title>
        <authorList>
            <person name="Daub H."/>
            <person name="Olsen J.V."/>
            <person name="Bairlein M."/>
            <person name="Gnad F."/>
            <person name="Oppermann F.S."/>
            <person name="Korner R."/>
            <person name="Greff Z."/>
            <person name="Keri G."/>
            <person name="Stemmann O."/>
            <person name="Mann M."/>
        </authorList>
    </citation>
    <scope>IDENTIFICATION BY MASS SPECTROMETRY [LARGE SCALE ANALYSIS]</scope>
    <source>
        <tissue>Cervix carcinoma</tissue>
    </source>
</reference>
<reference key="11">
    <citation type="journal article" date="2008" name="Proc. Natl. Acad. Sci. U.S.A.">
        <title>A quantitative atlas of mitotic phosphorylation.</title>
        <authorList>
            <person name="Dephoure N."/>
            <person name="Zhou C."/>
            <person name="Villen J."/>
            <person name="Beausoleil S.A."/>
            <person name="Bakalarski C.E."/>
            <person name="Elledge S.J."/>
            <person name="Gygi S.P."/>
        </authorList>
    </citation>
    <scope>PHOSPHORYLATION [LARGE SCALE ANALYSIS] AT SER-468; SER-470; SER-472 AND SER-558</scope>
    <scope>IDENTIFICATION BY MASS SPECTROMETRY [LARGE SCALE ANALYSIS]</scope>
    <source>
        <tissue>Cervix carcinoma</tissue>
    </source>
</reference>
<reference key="12">
    <citation type="journal article" date="2009" name="Sci. Signal.">
        <title>Quantitative phosphoproteomic analysis of T cell receptor signaling reveals system-wide modulation of protein-protein interactions.</title>
        <authorList>
            <person name="Mayya V."/>
            <person name="Lundgren D.H."/>
            <person name="Hwang S.-I."/>
            <person name="Rezaul K."/>
            <person name="Wu L."/>
            <person name="Eng J.K."/>
            <person name="Rodionov V."/>
            <person name="Han D.K."/>
        </authorList>
    </citation>
    <scope>PHOSPHORYLATION [LARGE SCALE ANALYSIS] AT SER-468; SER-470 AND SER-472</scope>
    <scope>IDENTIFICATION BY MASS SPECTROMETRY [LARGE SCALE ANALYSIS]</scope>
    <source>
        <tissue>Leukemic T-cell</tissue>
    </source>
</reference>
<reference key="13">
    <citation type="journal article" date="2009" name="Science">
        <title>Lysine acetylation targets protein complexes and co-regulates major cellular functions.</title>
        <authorList>
            <person name="Choudhary C."/>
            <person name="Kumar C."/>
            <person name="Gnad F."/>
            <person name="Nielsen M.L."/>
            <person name="Rehman M."/>
            <person name="Walther T.C."/>
            <person name="Olsen J.V."/>
            <person name="Mann M."/>
        </authorList>
    </citation>
    <scope>ACETYLATION [LARGE SCALE ANALYSIS] AT LYS-103 AND LYS-522</scope>
    <scope>IDENTIFICATION BY MASS SPECTROMETRY [LARGE SCALE ANALYSIS]</scope>
</reference>
<reference key="14">
    <citation type="journal article" date="2010" name="Proc. Natl. Acad. Sci. U.S.A.">
        <title>A genome-scale protein interaction profile of Drosophila p53 uncovers additional nodes of the human p53 network.</title>
        <authorList>
            <person name="Lunardi A."/>
            <person name="Di Minin G."/>
            <person name="Provero P."/>
            <person name="Dal Ferro M."/>
            <person name="Carotti M."/>
            <person name="Del Sal G."/>
            <person name="Collavin L."/>
        </authorList>
    </citation>
    <scope>FUNCTION</scope>
</reference>
<reference key="15">
    <citation type="journal article" date="2010" name="Sci. Signal.">
        <title>Quantitative phosphoproteomics reveals widespread full phosphorylation site occupancy during mitosis.</title>
        <authorList>
            <person name="Olsen J.V."/>
            <person name="Vermeulen M."/>
            <person name="Santamaria A."/>
            <person name="Kumar C."/>
            <person name="Miller M.L."/>
            <person name="Jensen L.J."/>
            <person name="Gnad F."/>
            <person name="Cox J."/>
            <person name="Jensen T.S."/>
            <person name="Nigg E.A."/>
            <person name="Brunak S."/>
            <person name="Mann M."/>
        </authorList>
    </citation>
    <scope>PHOSPHORYLATION [LARGE SCALE ANALYSIS] AT SER-468; SER-470 AND SER-472</scope>
    <scope>IDENTIFICATION BY MASS SPECTROMETRY [LARGE SCALE ANALYSIS]</scope>
    <source>
        <tissue>Cervix carcinoma</tissue>
    </source>
</reference>
<reference key="16">
    <citation type="journal article" date="2011" name="BMC Syst. Biol.">
        <title>Initial characterization of the human central proteome.</title>
        <authorList>
            <person name="Burkard T.R."/>
            <person name="Planyavsky M."/>
            <person name="Kaupe I."/>
            <person name="Breitwieser F.P."/>
            <person name="Buerckstuemmer T."/>
            <person name="Bennett K.L."/>
            <person name="Superti-Furga G."/>
            <person name="Colinge J."/>
        </authorList>
    </citation>
    <scope>IDENTIFICATION BY MASS SPECTROMETRY [LARGE SCALE ANALYSIS]</scope>
</reference>
<reference key="17">
    <citation type="journal article" date="2011" name="Sci. Signal.">
        <title>System-wide temporal characterization of the proteome and phosphoproteome of human embryonic stem cell differentiation.</title>
        <authorList>
            <person name="Rigbolt K.T."/>
            <person name="Prokhorova T.A."/>
            <person name="Akimov V."/>
            <person name="Henningsen J."/>
            <person name="Johansen P.T."/>
            <person name="Kratchmarova I."/>
            <person name="Kassem M."/>
            <person name="Mann M."/>
            <person name="Olsen J.V."/>
            <person name="Blagoev B."/>
        </authorList>
    </citation>
    <scope>PHOSPHORYLATION [LARGE SCALE ANALYSIS] AT SER-468 AND SER-470</scope>
    <scope>IDENTIFICATION BY MASS SPECTROMETRY [LARGE SCALE ANALYSIS]</scope>
</reference>
<reference key="18">
    <citation type="journal article" date="2013" name="J. Proteome Res.">
        <title>Toward a comprehensive characterization of a human cancer cell phosphoproteome.</title>
        <authorList>
            <person name="Zhou H."/>
            <person name="Di Palma S."/>
            <person name="Preisinger C."/>
            <person name="Peng M."/>
            <person name="Polat A.N."/>
            <person name="Heck A.J."/>
            <person name="Mohammed S."/>
        </authorList>
    </citation>
    <scope>PHOSPHORYLATION [LARGE SCALE ANALYSIS] AT SER-122</scope>
    <scope>IDENTIFICATION BY MASS SPECTROMETRY [LARGE SCALE ANALYSIS]</scope>
    <source>
        <tissue>Cervix carcinoma</tissue>
    </source>
</reference>
<reference key="19">
    <citation type="journal article" date="2017" name="Nat. Struct. Mol. Biol.">
        <title>Site-specific mapping of the human SUMO proteome reveals co-modification with phosphorylation.</title>
        <authorList>
            <person name="Hendriks I.A."/>
            <person name="Lyon D."/>
            <person name="Young C."/>
            <person name="Jensen L.J."/>
            <person name="Vertegaal A.C."/>
            <person name="Nielsen M.L."/>
        </authorList>
    </citation>
    <scope>SUMOYLATION [LARGE SCALE ANALYSIS] AT LYS-103; LYS-332 AND LYS-534</scope>
    <scope>IDENTIFICATION BY MASS SPECTROMETRY [LARGE SCALE ANALYSIS]</scope>
</reference>
<reference key="20">
    <citation type="journal article" date="2022" name="Nat. Chem. Biol.">
        <title>Nascent alt-protein chemoproteomics reveals a pre-60S assembly checkpoint inhibitor.</title>
        <authorList>
            <person name="Cao X."/>
            <person name="Khitun A."/>
            <person name="Harold C.M."/>
            <person name="Bryant C.J."/>
            <person name="Zheng S.J."/>
            <person name="Baserga S.J."/>
            <person name="Slavoff S.A."/>
        </authorList>
    </citation>
    <scope>INTERACTION WITH MINAS-60</scope>
</reference>
<reference evidence="13 14" key="21">
    <citation type="journal article" date="2020" name="Nat. Commun.">
        <title>Structural snapshots of human pre-60S ribosomal particles before and after nuclear export.</title>
        <authorList>
            <person name="Liang X."/>
            <person name="Zuo M.Q."/>
            <person name="Zhang Y."/>
            <person name="Li N."/>
            <person name="Ma C."/>
            <person name="Dong M.Q."/>
            <person name="Gao N."/>
        </authorList>
    </citation>
    <scope>STRUCTURE BY ELECTRON MICROSCOPY (3.13 ANGSTROMS)</scope>
    <scope>FUNCTION</scope>
    <scope>INTERACTION WITH PRE-60S RIBOSOMAL PARTICLES</scope>
</reference>
<comment type="function">
    <text evidence="6 7">Involved in the biogenesis of the 60S ribosomal subunit (PubMed:32669547). Acts as a TP53 repressor, preventing TP53 stabilization and cell cycle arrest (PubMed:20308539).</text>
</comment>
<comment type="subunit">
    <text evidence="7 8">Associates with pre-60S ribosomal particles (PubMed:32669547). Interacts with MINAS-60 (product of an alternative open reading frame of RBM10) (PubMed:35393574).</text>
</comment>
<comment type="interaction">
    <interactant intactId="EBI-1056249">
        <id>Q9BZE4</id>
    </interactant>
    <interactant intactId="EBI-359063">
        <id>P53618</id>
        <label>COPB1</label>
    </interactant>
    <organismsDiffer>false</organismsDiffer>
    <experiments>3</experiments>
</comment>
<comment type="interaction">
    <interactant intactId="EBI-1056249">
        <id>Q9BZE4</id>
    </interactant>
    <interactant intactId="EBI-466029">
        <id>P42858</id>
        <label>HTT</label>
    </interactant>
    <organismsDiffer>false</organismsDiffer>
    <experiments>3</experiments>
</comment>
<comment type="interaction">
    <interactant intactId="EBI-1056249">
        <id>Q9BZE4</id>
    </interactant>
    <interactant intactId="EBI-1014472">
        <id>P35240</id>
        <label>NF2</label>
    </interactant>
    <organismsDiffer>false</organismsDiffer>
    <experiments>9</experiments>
</comment>
<comment type="subcellular location">
    <subcellularLocation>
        <location evidence="3 4 9">Nucleus</location>
        <location evidence="3 4 9">Nucleolus</location>
    </subcellularLocation>
</comment>
<comment type="alternative products">
    <event type="alternative splicing"/>
    <isoform>
        <id>Q9BZE4-1</id>
        <name>1</name>
        <sequence type="displayed"/>
    </isoform>
    <isoform>
        <id>Q9BZE4-2</id>
        <name>2</name>
        <sequence type="described" ref="VSP_056147"/>
    </isoform>
    <isoform>
        <id>Q9BZE4-3</id>
        <name>3</name>
        <sequence type="described" ref="VSP_056146"/>
    </isoform>
</comment>
<comment type="similarity">
    <text evidence="1">Belongs to the TRAFAC class OBG-HflX-like GTPase superfamily. OBG GTPase family. NOG subfamily.</text>
</comment>
<sequence>MAHYNFKKITVVPSAKDFIDLTLSKTQRKTPTVIHKHYQIHRIRHFYMRKVKFTQQNYHDRLSQILTDFPKLDDIHPFYADLMNILYDKDHYKLALGQINIAKNLVDNVAKDYVRLMKYGDSLYRCKQLKRAALGRMCTVIKRQKQSLEYLEQVRQHLSRLPTIDPNTRTLLLCGYPNVGKSSFINKVTRADVDVQPYAFTTKSLFVGHMDYKYLRWQVVDTPGILDHPLEDRNTIEMQAITALAHLRAAVLYVMDLSEQCGHGLREQLELFQNIRPLFINKPLIVVANKCDVKRIAELSEDDQKIFTDLQSEGFPVIETSTLTEEGVIKVKTEACDRLLAHRVETKMKGNKVNEVLNRLHLAIPTRRDDKERPPFIPEGVVARRKRMETEESRKKRERDLELEMGDDYILDLQKYWDLMNLSEKHDKIPEIWEGHNIADYIDPAIMKKLEELEKEEELRTAAGEYDSVSESEDEEMLEIRQLAKQIREKKKLKILESKEKNTQGPRMPRTAKKVQRTVLEKEMRSLGVDMDDKDDAHYAVQARRSRSITRKRKREDSAPPSSVARSGSCSRTPRDVSGLRDVKMVKKAKTMMKNAQKKMNRLGKKGEADRHVFDMKPKHLLSGKRKAGKKDRR</sequence>
<organism>
    <name type="scientific">Homo sapiens</name>
    <name type="common">Human</name>
    <dbReference type="NCBI Taxonomy" id="9606"/>
    <lineage>
        <taxon>Eukaryota</taxon>
        <taxon>Metazoa</taxon>
        <taxon>Chordata</taxon>
        <taxon>Craniata</taxon>
        <taxon>Vertebrata</taxon>
        <taxon>Euteleostomi</taxon>
        <taxon>Mammalia</taxon>
        <taxon>Eutheria</taxon>
        <taxon>Euarchontoglires</taxon>
        <taxon>Primates</taxon>
        <taxon>Haplorrhini</taxon>
        <taxon>Catarrhini</taxon>
        <taxon>Hominidae</taxon>
        <taxon>Homo</taxon>
    </lineage>
</organism>
<gene>
    <name evidence="12" type="primary">GTPBP4</name>
    <name type="synonym">CRFG</name>
    <name type="synonym">NOG1</name>
</gene>
<proteinExistence type="evidence at protein level"/>